<keyword id="KW-1185">Reference proteome</keyword>
<keyword id="KW-0964">Secreted</keyword>
<keyword id="KW-0732">Signal</keyword>
<sequence>MVLMVVVFLLLLFWENELTEDVVLTSIEQLHVDYPQNAVPLRYCNYMILQRVIREPDHRCRKVHVFIHERPQKINRVCTSSKKMSCPNDSDLFCFQSETKFRMTVCQLIDGTTYPACRYQISPIKGFVLVTCDDLGPVDLQGYVE</sequence>
<organism>
    <name type="scientific">Mus musculus</name>
    <name type="common">Mouse</name>
    <dbReference type="NCBI Taxonomy" id="10090"/>
    <lineage>
        <taxon>Eukaryota</taxon>
        <taxon>Metazoa</taxon>
        <taxon>Chordata</taxon>
        <taxon>Craniata</taxon>
        <taxon>Vertebrata</taxon>
        <taxon>Euteleostomi</taxon>
        <taxon>Mammalia</taxon>
        <taxon>Eutheria</taxon>
        <taxon>Euarchontoglires</taxon>
        <taxon>Glires</taxon>
        <taxon>Rodentia</taxon>
        <taxon>Myomorpha</taxon>
        <taxon>Muroidea</taxon>
        <taxon>Muridae</taxon>
        <taxon>Murinae</taxon>
        <taxon>Mus</taxon>
        <taxon>Mus</taxon>
    </lineage>
</organism>
<feature type="signal peptide" evidence="1">
    <location>
        <begin position="1"/>
        <end position="19"/>
    </location>
</feature>
<feature type="chain" id="PRO_0000308703" description="Probable inactive ribonuclease-like protein 12">
    <location>
        <begin position="20"/>
        <end position="145"/>
    </location>
</feature>
<protein>
    <recommendedName>
        <fullName>Probable inactive ribonuclease-like protein 12</fullName>
    </recommendedName>
</protein>
<name>RNS12_MOUSE</name>
<reference key="1">
    <citation type="journal article" date="2005" name="Genomics">
        <title>The ribonuclease A superfamily of mammals and birds: identifying new members and tracing evolutionary histories.</title>
        <authorList>
            <person name="Cho S."/>
            <person name="Beintema J.J."/>
            <person name="Zhang J."/>
        </authorList>
    </citation>
    <scope>NUCLEOTIDE SEQUENCE [GENOMIC DNA]</scope>
    <source>
        <strain>C57BL/6J</strain>
    </source>
</reference>
<reference key="2">
    <citation type="journal article" date="2004" name="Genome Res.">
        <title>The status, quality, and expansion of the NIH full-length cDNA project: the Mammalian Gene Collection (MGC).</title>
        <authorList>
            <consortium name="The MGC Project Team"/>
        </authorList>
    </citation>
    <scope>NUCLEOTIDE SEQUENCE [LARGE SCALE MRNA]</scope>
    <source>
        <tissue>Brain</tissue>
    </source>
</reference>
<dbReference type="EMBL" id="AY665824">
    <property type="protein sequence ID" value="AAV87191.1"/>
    <property type="molecule type" value="Genomic_DNA"/>
</dbReference>
<dbReference type="EMBL" id="BC146014">
    <property type="protein sequence ID" value="AAI46015.1"/>
    <property type="molecule type" value="mRNA"/>
</dbReference>
<dbReference type="EMBL" id="BC146016">
    <property type="protein sequence ID" value="AAI46017.1"/>
    <property type="molecule type" value="mRNA"/>
</dbReference>
<dbReference type="CCDS" id="CCDS27032.1"/>
<dbReference type="RefSeq" id="NP_001011875.1">
    <property type="nucleotide sequence ID" value="NM_001011875.2"/>
</dbReference>
<dbReference type="SMR" id="Q5GAM8"/>
<dbReference type="FunCoup" id="Q5GAM8">
    <property type="interactions" value="1"/>
</dbReference>
<dbReference type="STRING" id="10090.ENSMUSP00000154201"/>
<dbReference type="PaxDb" id="10090-ENSMUSP00000087231"/>
<dbReference type="ProteomicsDB" id="260825"/>
<dbReference type="Antibodypedia" id="57709">
    <property type="antibodies" value="90 antibodies from 17 providers"/>
</dbReference>
<dbReference type="DNASU" id="497106"/>
<dbReference type="Ensembl" id="ENSMUST00000089798.3">
    <property type="protein sequence ID" value="ENSMUSP00000087231.3"/>
    <property type="gene ID" value="ENSMUSG00000068407.4"/>
</dbReference>
<dbReference type="Ensembl" id="ENSMUST00000227764.2">
    <property type="protein sequence ID" value="ENSMUSP00000154201.2"/>
    <property type="gene ID" value="ENSMUSG00000068407.4"/>
</dbReference>
<dbReference type="GeneID" id="497106"/>
<dbReference type="KEGG" id="mmu:497106"/>
<dbReference type="UCSC" id="uc007tmj.2">
    <property type="organism name" value="mouse"/>
</dbReference>
<dbReference type="AGR" id="MGI:3528588"/>
<dbReference type="CTD" id="493901"/>
<dbReference type="MGI" id="MGI:3528588">
    <property type="gene designation" value="Rnase12"/>
</dbReference>
<dbReference type="VEuPathDB" id="HostDB:ENSMUSG00000068407"/>
<dbReference type="eggNOG" id="ENOG502T3VJ">
    <property type="taxonomic scope" value="Eukaryota"/>
</dbReference>
<dbReference type="GeneTree" id="ENSGT00730000111478"/>
<dbReference type="HOGENOM" id="CLU_117006_1_0_1"/>
<dbReference type="InParanoid" id="Q5GAM8"/>
<dbReference type="OMA" id="KHVFIHE"/>
<dbReference type="OrthoDB" id="9824991at2759"/>
<dbReference type="PhylomeDB" id="Q5GAM8"/>
<dbReference type="TreeFam" id="TF333393"/>
<dbReference type="BioGRID-ORCS" id="497106">
    <property type="hits" value="1 hit in 78 CRISPR screens"/>
</dbReference>
<dbReference type="PRO" id="PR:Q5GAM8"/>
<dbReference type="Proteomes" id="UP000000589">
    <property type="component" value="Chromosome 14"/>
</dbReference>
<dbReference type="RNAct" id="Q5GAM8">
    <property type="molecule type" value="protein"/>
</dbReference>
<dbReference type="Bgee" id="ENSMUSG00000068407">
    <property type="expression patterns" value="Expressed in blastoderm cell in morula and 29 other cell types or tissues"/>
</dbReference>
<dbReference type="ExpressionAtlas" id="Q5GAM8">
    <property type="expression patterns" value="baseline and differential"/>
</dbReference>
<dbReference type="GO" id="GO:0005576">
    <property type="term" value="C:extracellular region"/>
    <property type="evidence" value="ECO:0007669"/>
    <property type="project" value="UniProtKB-SubCell"/>
</dbReference>
<dbReference type="GO" id="GO:0003676">
    <property type="term" value="F:nucleic acid binding"/>
    <property type="evidence" value="ECO:0007669"/>
    <property type="project" value="InterPro"/>
</dbReference>
<dbReference type="FunFam" id="3.10.130.10:FF:000002">
    <property type="entry name" value="Inactive ribonuclease-like protein 10"/>
    <property type="match status" value="1"/>
</dbReference>
<dbReference type="Gene3D" id="3.10.130.10">
    <property type="entry name" value="Ribonuclease A-like domain"/>
    <property type="match status" value="1"/>
</dbReference>
<dbReference type="InterPro" id="IPR001427">
    <property type="entry name" value="RNaseA"/>
</dbReference>
<dbReference type="InterPro" id="IPR036816">
    <property type="entry name" value="RNaseA-like_dom_sf"/>
</dbReference>
<dbReference type="InterPro" id="IPR023412">
    <property type="entry name" value="RNaseA_domain"/>
</dbReference>
<dbReference type="PANTHER" id="PTHR11437:SF20">
    <property type="entry name" value="INACTIVE RIBONUCLEASE-LIKE PROTEIN 12-RELATED"/>
    <property type="match status" value="1"/>
</dbReference>
<dbReference type="PANTHER" id="PTHR11437">
    <property type="entry name" value="RIBONUCLEASE"/>
    <property type="match status" value="1"/>
</dbReference>
<dbReference type="Pfam" id="PF00074">
    <property type="entry name" value="RnaseA"/>
    <property type="match status" value="1"/>
</dbReference>
<dbReference type="PRINTS" id="PR00794">
    <property type="entry name" value="RIBONUCLEASE"/>
</dbReference>
<dbReference type="SMART" id="SM00092">
    <property type="entry name" value="RNAse_Pc"/>
    <property type="match status" value="1"/>
</dbReference>
<dbReference type="SUPFAM" id="SSF54076">
    <property type="entry name" value="RNase A-like"/>
    <property type="match status" value="1"/>
</dbReference>
<accession>Q5GAM8</accession>
<evidence type="ECO:0000255" key="1"/>
<evidence type="ECO:0000305" key="2"/>
<gene>
    <name type="primary">Rnase12</name>
</gene>
<proteinExistence type="evidence at transcript level"/>
<comment type="function">
    <text evidence="2">Does not exhibit any ribonuclease activity.</text>
</comment>
<comment type="subcellular location">
    <subcellularLocation>
        <location evidence="2">Secreted</location>
    </subcellularLocation>
</comment>
<comment type="similarity">
    <text evidence="2">Belongs to the pancreatic ribonuclease family.</text>
</comment>